<gene>
    <name evidence="1" type="primary">nuoD</name>
    <name type="ordered locus">Suden_1826</name>
</gene>
<reference key="1">
    <citation type="journal article" date="2008" name="Appl. Environ. Microbiol.">
        <title>Genome of the epsilonproteobacterial chemolithoautotroph Sulfurimonas denitrificans.</title>
        <authorList>
            <person name="Sievert S.M."/>
            <person name="Scott K.M."/>
            <person name="Klotz M.G."/>
            <person name="Chain P.S.G."/>
            <person name="Hauser L.J."/>
            <person name="Hemp J."/>
            <person name="Huegler M."/>
            <person name="Land M."/>
            <person name="Lapidus A."/>
            <person name="Larimer F.W."/>
            <person name="Lucas S."/>
            <person name="Malfatti S.A."/>
            <person name="Meyer F."/>
            <person name="Paulsen I.T."/>
            <person name="Ren Q."/>
            <person name="Simon J."/>
            <person name="Bailey K."/>
            <person name="Diaz E."/>
            <person name="Fitzpatrick K.A."/>
            <person name="Glover B."/>
            <person name="Gwatney N."/>
            <person name="Korajkic A."/>
            <person name="Long A."/>
            <person name="Mobberley J.M."/>
            <person name="Pantry S.N."/>
            <person name="Pazder G."/>
            <person name="Peterson S."/>
            <person name="Quintanilla J.D."/>
            <person name="Sprinkle R."/>
            <person name="Stephens J."/>
            <person name="Thomas P."/>
            <person name="Vaughn R."/>
            <person name="Weber M.J."/>
            <person name="Wooten L.L."/>
        </authorList>
    </citation>
    <scope>NUCLEOTIDE SEQUENCE [LARGE SCALE GENOMIC DNA]</scope>
    <source>
        <strain>ATCC 33889 / DSM 1251</strain>
    </source>
</reference>
<keyword id="KW-0997">Cell inner membrane</keyword>
<keyword id="KW-1003">Cell membrane</keyword>
<keyword id="KW-0472">Membrane</keyword>
<keyword id="KW-0520">NAD</keyword>
<keyword id="KW-0874">Quinone</keyword>
<keyword id="KW-1185">Reference proteome</keyword>
<keyword id="KW-1278">Translocase</keyword>
<keyword id="KW-0813">Transport</keyword>
<keyword id="KW-0830">Ubiquinone</keyword>
<proteinExistence type="inferred from homology"/>
<feature type="chain" id="PRO_0000371928" description="NADH-quinone oxidoreductase subunit D">
    <location>
        <begin position="1"/>
        <end position="412"/>
    </location>
</feature>
<evidence type="ECO:0000255" key="1">
    <source>
        <dbReference type="HAMAP-Rule" id="MF_01358"/>
    </source>
</evidence>
<organism>
    <name type="scientific">Sulfurimonas denitrificans (strain ATCC 33889 / DSM 1251)</name>
    <name type="common">Thiomicrospira denitrificans (strain ATCC 33889 / DSM 1251)</name>
    <dbReference type="NCBI Taxonomy" id="326298"/>
    <lineage>
        <taxon>Bacteria</taxon>
        <taxon>Pseudomonadati</taxon>
        <taxon>Campylobacterota</taxon>
        <taxon>Epsilonproteobacteria</taxon>
        <taxon>Campylobacterales</taxon>
        <taxon>Sulfurimonadaceae</taxon>
        <taxon>Sulfurimonas</taxon>
    </lineage>
</organism>
<sequence>MQVKNRLTPFFENITFDREDNEMILNFGPQHPSAHGQLRLMLHLQQEMIVKAHPDIGYLHRGMEKMAENMIYNEFMPTTDRMDYIASSANNYGFALAVERLIGLEVPRRAKVIRMMLLEINRLMSHLFWLATTALDIGAMTVFLFAFREREYLMDIMEGYCGARLTHAAIRIGGVPLDIQDTFITQLKTFLDKLPQNIKDYEDLLDTNRIWLMRMEEVGVISKEMALSWGCSGPMLRASGVAWDIRKEEPYELYDEVEFRVPYSDKGDNFARYRIYMEEMRESAKILYQTIDMYEKCVKDNQTELMAHAPKYISAPKLDIMTQNYSLMQHFVLVTQGMRPPVGEVYVATESPKGELGFYINSQGGPYPYRLKLRAPSFWHTGILTDILPGHYIPDVVSIIGTTNIVFGEVDR</sequence>
<protein>
    <recommendedName>
        <fullName evidence="1">NADH-quinone oxidoreductase subunit D</fullName>
        <ecNumber evidence="1">7.1.1.-</ecNumber>
    </recommendedName>
    <alternativeName>
        <fullName evidence="1">NADH dehydrogenase I subunit D</fullName>
    </alternativeName>
    <alternativeName>
        <fullName evidence="1">NDH-1 subunit D</fullName>
    </alternativeName>
</protein>
<name>NUOD_SULDN</name>
<dbReference type="EC" id="7.1.1.-" evidence="1"/>
<dbReference type="EMBL" id="CP000153">
    <property type="protein sequence ID" value="ABB45100.1"/>
    <property type="molecule type" value="Genomic_DNA"/>
</dbReference>
<dbReference type="RefSeq" id="WP_011373440.1">
    <property type="nucleotide sequence ID" value="NC_007575.1"/>
</dbReference>
<dbReference type="SMR" id="Q30PI1"/>
<dbReference type="STRING" id="326298.Suden_1826"/>
<dbReference type="KEGG" id="tdn:Suden_1826"/>
<dbReference type="eggNOG" id="COG0649">
    <property type="taxonomic scope" value="Bacteria"/>
</dbReference>
<dbReference type="HOGENOM" id="CLU_015134_1_2_7"/>
<dbReference type="OrthoDB" id="9801496at2"/>
<dbReference type="Proteomes" id="UP000002714">
    <property type="component" value="Chromosome"/>
</dbReference>
<dbReference type="GO" id="GO:0005886">
    <property type="term" value="C:plasma membrane"/>
    <property type="evidence" value="ECO:0007669"/>
    <property type="project" value="UniProtKB-SubCell"/>
</dbReference>
<dbReference type="GO" id="GO:0051287">
    <property type="term" value="F:NAD binding"/>
    <property type="evidence" value="ECO:0007669"/>
    <property type="project" value="InterPro"/>
</dbReference>
<dbReference type="GO" id="GO:0050136">
    <property type="term" value="F:NADH:ubiquinone reductase (non-electrogenic) activity"/>
    <property type="evidence" value="ECO:0007669"/>
    <property type="project" value="UniProtKB-UniRule"/>
</dbReference>
<dbReference type="GO" id="GO:0048038">
    <property type="term" value="F:quinone binding"/>
    <property type="evidence" value="ECO:0007669"/>
    <property type="project" value="UniProtKB-KW"/>
</dbReference>
<dbReference type="Gene3D" id="1.10.645.10">
    <property type="entry name" value="Cytochrome-c3 Hydrogenase, chain B"/>
    <property type="match status" value="1"/>
</dbReference>
<dbReference type="HAMAP" id="MF_01358">
    <property type="entry name" value="NDH1_NuoD"/>
    <property type="match status" value="1"/>
</dbReference>
<dbReference type="InterPro" id="IPR001135">
    <property type="entry name" value="NADH_Q_OxRdtase_suD"/>
</dbReference>
<dbReference type="InterPro" id="IPR022885">
    <property type="entry name" value="NDH1_su_D/H"/>
</dbReference>
<dbReference type="InterPro" id="IPR029014">
    <property type="entry name" value="NiFe-Hase_large"/>
</dbReference>
<dbReference type="NCBIfam" id="TIGR01962">
    <property type="entry name" value="NuoD"/>
    <property type="match status" value="1"/>
</dbReference>
<dbReference type="NCBIfam" id="NF004739">
    <property type="entry name" value="PRK06075.1"/>
    <property type="match status" value="1"/>
</dbReference>
<dbReference type="PANTHER" id="PTHR11993:SF10">
    <property type="entry name" value="NADH DEHYDROGENASE [UBIQUINONE] IRON-SULFUR PROTEIN 2, MITOCHONDRIAL"/>
    <property type="match status" value="1"/>
</dbReference>
<dbReference type="PANTHER" id="PTHR11993">
    <property type="entry name" value="NADH-UBIQUINONE OXIDOREDUCTASE 49 KDA SUBUNIT"/>
    <property type="match status" value="1"/>
</dbReference>
<dbReference type="Pfam" id="PF00346">
    <property type="entry name" value="Complex1_49kDa"/>
    <property type="match status" value="1"/>
</dbReference>
<dbReference type="SUPFAM" id="SSF56762">
    <property type="entry name" value="HydB/Nqo4-like"/>
    <property type="match status" value="1"/>
</dbReference>
<accession>Q30PI1</accession>
<comment type="function">
    <text evidence="1">NDH-1 shuttles electrons from NADH, via FMN and iron-sulfur (Fe-S) centers, to quinones in the respiratory chain. The immediate electron acceptor for the enzyme in this species is believed to be ubiquinone. Couples the redox reaction to proton translocation (for every two electrons transferred, four hydrogen ions are translocated across the cytoplasmic membrane), and thus conserves the redox energy in a proton gradient.</text>
</comment>
<comment type="catalytic activity">
    <reaction evidence="1">
        <text>a quinone + NADH + 5 H(+)(in) = a quinol + NAD(+) + 4 H(+)(out)</text>
        <dbReference type="Rhea" id="RHEA:57888"/>
        <dbReference type="ChEBI" id="CHEBI:15378"/>
        <dbReference type="ChEBI" id="CHEBI:24646"/>
        <dbReference type="ChEBI" id="CHEBI:57540"/>
        <dbReference type="ChEBI" id="CHEBI:57945"/>
        <dbReference type="ChEBI" id="CHEBI:132124"/>
    </reaction>
</comment>
<comment type="subunit">
    <text evidence="1">NDH-1 is composed of 14 different subunits. Subunits NuoB, C, D, E, F, and G constitute the peripheral sector of the complex.</text>
</comment>
<comment type="subcellular location">
    <subcellularLocation>
        <location evidence="1">Cell inner membrane</location>
        <topology evidence="1">Peripheral membrane protein</topology>
        <orientation evidence="1">Cytoplasmic side</orientation>
    </subcellularLocation>
</comment>
<comment type="similarity">
    <text evidence="1">Belongs to the complex I 49 kDa subunit family.</text>
</comment>